<organism>
    <name type="scientific">Streptococcus gordonii (strain Challis / ATCC 35105 / BCRC 15272 / CH1 / DL1 / V288)</name>
    <dbReference type="NCBI Taxonomy" id="467705"/>
    <lineage>
        <taxon>Bacteria</taxon>
        <taxon>Bacillati</taxon>
        <taxon>Bacillota</taxon>
        <taxon>Bacilli</taxon>
        <taxon>Lactobacillales</taxon>
        <taxon>Streptococcaceae</taxon>
        <taxon>Streptococcus</taxon>
    </lineage>
</organism>
<keyword id="KW-0030">Aminoacyl-tRNA synthetase</keyword>
<keyword id="KW-0067">ATP-binding</keyword>
<keyword id="KW-0963">Cytoplasm</keyword>
<keyword id="KW-0436">Ligase</keyword>
<keyword id="KW-0547">Nucleotide-binding</keyword>
<keyword id="KW-0648">Protein biosynthesis</keyword>
<keyword id="KW-1185">Reference proteome</keyword>
<sequence length="485" mass="55790">MAKAIRVRYAPSPTGLLHIGNARTALFNYLYARHHGGTFIIRIEDTDRKRHVEDGERSQLENLRWLGMDWDESPETHENYRQSERLELYQKYIDQLLAEGKAYKSYVTEEELAAERERQEAAGETPRYINEYLGMSEEEKAAYIAEREAAGIIPTVRLSVNESGIYKWHDIVKGDIEFEGGNIGGDWVIQKKDGYPTYNFAVVIDDHDMQISHVIRGDDHIANTPKQLMVYEALGWEAPEFGHMTLIINSETGKKLSKRDTNTLQFIEDYRKKGYLPEAVFNFIALLGWNPGGEDEIFSREELIKLFDENRLSKSPAAFDQKKLDWMSNEYIKNADFERIFALAKPYLEEAGRLTDKAEKLVELYKPQMKSVDEIVPLTDLFFSDFPELTEAEREVMAGETVPVVLEAFKAKLEAMTDEEFVTENIFPQIKAVQKETGIKGKNLFMPIRIAVSGEMHGPELPDTIYLLGREKSIQHIENMLNQIQ</sequence>
<reference key="1">
    <citation type="journal article" date="2007" name="J. Bacteriol.">
        <title>Genome-wide transcriptional changes in Streptococcus gordonii in response to competence signaling peptide.</title>
        <authorList>
            <person name="Vickerman M.M."/>
            <person name="Iobst S."/>
            <person name="Jesionowski A.M."/>
            <person name="Gill S.R."/>
        </authorList>
    </citation>
    <scope>NUCLEOTIDE SEQUENCE [LARGE SCALE GENOMIC DNA]</scope>
    <source>
        <strain>Challis / ATCC 35105 / BCRC 15272 / CH1 / DL1 / V288</strain>
    </source>
</reference>
<accession>A8AUN5</accession>
<evidence type="ECO:0000255" key="1">
    <source>
        <dbReference type="HAMAP-Rule" id="MF_00022"/>
    </source>
</evidence>
<gene>
    <name evidence="1" type="primary">gltX</name>
    <name type="ordered locus">SGO_0174</name>
</gene>
<dbReference type="EC" id="6.1.1.17" evidence="1"/>
<dbReference type="EMBL" id="CP000725">
    <property type="protein sequence ID" value="ABV10390.1"/>
    <property type="molecule type" value="Genomic_DNA"/>
</dbReference>
<dbReference type="RefSeq" id="WP_011999715.1">
    <property type="nucleotide sequence ID" value="NC_009785.1"/>
</dbReference>
<dbReference type="SMR" id="A8AUN5"/>
<dbReference type="STRING" id="467705.SGO_0174"/>
<dbReference type="KEGG" id="sgo:SGO_0174"/>
<dbReference type="eggNOG" id="COG0008">
    <property type="taxonomic scope" value="Bacteria"/>
</dbReference>
<dbReference type="HOGENOM" id="CLU_015768_6_1_9"/>
<dbReference type="Proteomes" id="UP000001131">
    <property type="component" value="Chromosome"/>
</dbReference>
<dbReference type="GO" id="GO:0005829">
    <property type="term" value="C:cytosol"/>
    <property type="evidence" value="ECO:0007669"/>
    <property type="project" value="TreeGrafter"/>
</dbReference>
<dbReference type="GO" id="GO:0005524">
    <property type="term" value="F:ATP binding"/>
    <property type="evidence" value="ECO:0007669"/>
    <property type="project" value="UniProtKB-UniRule"/>
</dbReference>
<dbReference type="GO" id="GO:0004818">
    <property type="term" value="F:glutamate-tRNA ligase activity"/>
    <property type="evidence" value="ECO:0007669"/>
    <property type="project" value="UniProtKB-UniRule"/>
</dbReference>
<dbReference type="GO" id="GO:0000049">
    <property type="term" value="F:tRNA binding"/>
    <property type="evidence" value="ECO:0007669"/>
    <property type="project" value="InterPro"/>
</dbReference>
<dbReference type="GO" id="GO:0008270">
    <property type="term" value="F:zinc ion binding"/>
    <property type="evidence" value="ECO:0007669"/>
    <property type="project" value="InterPro"/>
</dbReference>
<dbReference type="GO" id="GO:0006424">
    <property type="term" value="P:glutamyl-tRNA aminoacylation"/>
    <property type="evidence" value="ECO:0007669"/>
    <property type="project" value="UniProtKB-UniRule"/>
</dbReference>
<dbReference type="CDD" id="cd00808">
    <property type="entry name" value="GluRS_core"/>
    <property type="match status" value="1"/>
</dbReference>
<dbReference type="FunFam" id="1.10.10.350:FF:000002">
    <property type="entry name" value="Glutamate--tRNA ligase"/>
    <property type="match status" value="1"/>
</dbReference>
<dbReference type="FunFam" id="3.40.50.620:FF:000007">
    <property type="entry name" value="Glutamate--tRNA ligase"/>
    <property type="match status" value="1"/>
</dbReference>
<dbReference type="Gene3D" id="1.10.10.350">
    <property type="match status" value="1"/>
</dbReference>
<dbReference type="Gene3D" id="3.40.50.620">
    <property type="entry name" value="HUPs"/>
    <property type="match status" value="1"/>
</dbReference>
<dbReference type="HAMAP" id="MF_00022">
    <property type="entry name" value="Glu_tRNA_synth_type1"/>
    <property type="match status" value="1"/>
</dbReference>
<dbReference type="InterPro" id="IPR045462">
    <property type="entry name" value="aa-tRNA-synth_I_cd-bd"/>
</dbReference>
<dbReference type="InterPro" id="IPR020751">
    <property type="entry name" value="aa-tRNA-synth_I_codon-bd_sub2"/>
</dbReference>
<dbReference type="InterPro" id="IPR001412">
    <property type="entry name" value="aa-tRNA-synth_I_CS"/>
</dbReference>
<dbReference type="InterPro" id="IPR008925">
    <property type="entry name" value="aa_tRNA-synth_I_cd-bd_sf"/>
</dbReference>
<dbReference type="InterPro" id="IPR004527">
    <property type="entry name" value="Glu-tRNA-ligase_bac/mito"/>
</dbReference>
<dbReference type="InterPro" id="IPR000924">
    <property type="entry name" value="Glu/Gln-tRNA-synth"/>
</dbReference>
<dbReference type="InterPro" id="IPR020058">
    <property type="entry name" value="Glu/Gln-tRNA-synth_Ib_cat-dom"/>
</dbReference>
<dbReference type="InterPro" id="IPR049940">
    <property type="entry name" value="GluQ/Sye"/>
</dbReference>
<dbReference type="InterPro" id="IPR033910">
    <property type="entry name" value="GluRS_core"/>
</dbReference>
<dbReference type="InterPro" id="IPR014729">
    <property type="entry name" value="Rossmann-like_a/b/a_fold"/>
</dbReference>
<dbReference type="NCBIfam" id="TIGR00464">
    <property type="entry name" value="gltX_bact"/>
    <property type="match status" value="1"/>
</dbReference>
<dbReference type="PANTHER" id="PTHR43311">
    <property type="entry name" value="GLUTAMATE--TRNA LIGASE"/>
    <property type="match status" value="1"/>
</dbReference>
<dbReference type="PANTHER" id="PTHR43311:SF2">
    <property type="entry name" value="GLUTAMATE--TRNA LIGASE, MITOCHONDRIAL-RELATED"/>
    <property type="match status" value="1"/>
</dbReference>
<dbReference type="Pfam" id="PF19269">
    <property type="entry name" value="Anticodon_2"/>
    <property type="match status" value="1"/>
</dbReference>
<dbReference type="Pfam" id="PF00749">
    <property type="entry name" value="tRNA-synt_1c"/>
    <property type="match status" value="1"/>
</dbReference>
<dbReference type="PRINTS" id="PR00987">
    <property type="entry name" value="TRNASYNTHGLU"/>
</dbReference>
<dbReference type="SUPFAM" id="SSF48163">
    <property type="entry name" value="An anticodon-binding domain of class I aminoacyl-tRNA synthetases"/>
    <property type="match status" value="1"/>
</dbReference>
<dbReference type="SUPFAM" id="SSF52374">
    <property type="entry name" value="Nucleotidylyl transferase"/>
    <property type="match status" value="1"/>
</dbReference>
<dbReference type="PROSITE" id="PS00178">
    <property type="entry name" value="AA_TRNA_LIGASE_I"/>
    <property type="match status" value="1"/>
</dbReference>
<feature type="chain" id="PRO_1000074339" description="Glutamate--tRNA ligase">
    <location>
        <begin position="1"/>
        <end position="485"/>
    </location>
</feature>
<feature type="short sequence motif" description="'HIGH' region" evidence="1">
    <location>
        <begin position="11"/>
        <end position="21"/>
    </location>
</feature>
<feature type="short sequence motif" description="'KMSKS' region" evidence="1">
    <location>
        <begin position="255"/>
        <end position="259"/>
    </location>
</feature>
<feature type="binding site" evidence="1">
    <location>
        <position position="258"/>
    </location>
    <ligand>
        <name>ATP</name>
        <dbReference type="ChEBI" id="CHEBI:30616"/>
    </ligand>
</feature>
<name>SYE_STRGC</name>
<protein>
    <recommendedName>
        <fullName evidence="1">Glutamate--tRNA ligase</fullName>
        <ecNumber evidence="1">6.1.1.17</ecNumber>
    </recommendedName>
    <alternativeName>
        <fullName evidence="1">Glutamyl-tRNA synthetase</fullName>
        <shortName evidence="1">GluRS</shortName>
    </alternativeName>
</protein>
<comment type="function">
    <text evidence="1">Catalyzes the attachment of glutamate to tRNA(Glu) in a two-step reaction: glutamate is first activated by ATP to form Glu-AMP and then transferred to the acceptor end of tRNA(Glu).</text>
</comment>
<comment type="catalytic activity">
    <reaction evidence="1">
        <text>tRNA(Glu) + L-glutamate + ATP = L-glutamyl-tRNA(Glu) + AMP + diphosphate</text>
        <dbReference type="Rhea" id="RHEA:23540"/>
        <dbReference type="Rhea" id="RHEA-COMP:9663"/>
        <dbReference type="Rhea" id="RHEA-COMP:9680"/>
        <dbReference type="ChEBI" id="CHEBI:29985"/>
        <dbReference type="ChEBI" id="CHEBI:30616"/>
        <dbReference type="ChEBI" id="CHEBI:33019"/>
        <dbReference type="ChEBI" id="CHEBI:78442"/>
        <dbReference type="ChEBI" id="CHEBI:78520"/>
        <dbReference type="ChEBI" id="CHEBI:456215"/>
        <dbReference type="EC" id="6.1.1.17"/>
    </reaction>
</comment>
<comment type="subunit">
    <text evidence="1">Monomer.</text>
</comment>
<comment type="subcellular location">
    <subcellularLocation>
        <location evidence="1">Cytoplasm</location>
    </subcellularLocation>
</comment>
<comment type="similarity">
    <text evidence="1">Belongs to the class-I aminoacyl-tRNA synthetase family. Glutamate--tRNA ligase type 1 subfamily.</text>
</comment>
<proteinExistence type="inferred from homology"/>